<protein>
    <recommendedName>
        <fullName evidence="1">Protein TON_1965</fullName>
    </recommendedName>
</protein>
<proteinExistence type="inferred from homology"/>
<dbReference type="EMBL" id="CP000855">
    <property type="protein sequence ID" value="ACJ17457.1"/>
    <property type="molecule type" value="Genomic_DNA"/>
</dbReference>
<dbReference type="RefSeq" id="WP_012572928.1">
    <property type="nucleotide sequence ID" value="NC_011529.1"/>
</dbReference>
<dbReference type="SMR" id="B6YW91"/>
<dbReference type="STRING" id="523850.TON_1965"/>
<dbReference type="GeneID" id="7017643"/>
<dbReference type="KEGG" id="ton:TON_1965"/>
<dbReference type="PATRIC" id="fig|523850.10.peg.1981"/>
<dbReference type="eggNOG" id="arCOG01336">
    <property type="taxonomic scope" value="Archaea"/>
</dbReference>
<dbReference type="HOGENOM" id="CLU_095686_1_1_2"/>
<dbReference type="OrthoDB" id="25187at2157"/>
<dbReference type="Proteomes" id="UP000002727">
    <property type="component" value="Chromosome"/>
</dbReference>
<dbReference type="Gene3D" id="3.30.700.20">
    <property type="entry name" value="Hypothetical protein ph0010, domain 1"/>
    <property type="match status" value="1"/>
</dbReference>
<dbReference type="Gene3D" id="3.30.1490.150">
    <property type="entry name" value="Hypothetical protein ph0010, domain 2"/>
    <property type="match status" value="1"/>
</dbReference>
<dbReference type="HAMAP" id="MF_00645">
    <property type="entry name" value="AMMECR1"/>
    <property type="match status" value="1"/>
</dbReference>
<dbReference type="InterPro" id="IPR023473">
    <property type="entry name" value="AMMECR1"/>
</dbReference>
<dbReference type="InterPro" id="IPR036071">
    <property type="entry name" value="AMMECR1_dom_sf"/>
</dbReference>
<dbReference type="InterPro" id="IPR002733">
    <property type="entry name" value="AMMECR1_domain"/>
</dbReference>
<dbReference type="InterPro" id="IPR027485">
    <property type="entry name" value="AMMECR1_N"/>
</dbReference>
<dbReference type="InterPro" id="IPR027623">
    <property type="entry name" value="AmmeMemoSam_A"/>
</dbReference>
<dbReference type="InterPro" id="IPR023472">
    <property type="entry name" value="Uncharacterised_MJ0810"/>
</dbReference>
<dbReference type="NCBIfam" id="TIGR04335">
    <property type="entry name" value="AmmeMemoSam_A"/>
    <property type="match status" value="1"/>
</dbReference>
<dbReference type="NCBIfam" id="NF002000">
    <property type="entry name" value="PRK00801.1"/>
    <property type="match status" value="1"/>
</dbReference>
<dbReference type="NCBIfam" id="TIGR00296">
    <property type="entry name" value="TIGR00296 family protein"/>
    <property type="match status" value="1"/>
</dbReference>
<dbReference type="PANTHER" id="PTHR13016:SF0">
    <property type="entry name" value="AMME SYNDROME CANDIDATE GENE 1 PROTEIN"/>
    <property type="match status" value="1"/>
</dbReference>
<dbReference type="PANTHER" id="PTHR13016">
    <property type="entry name" value="AMMECR1 HOMOLOG"/>
    <property type="match status" value="1"/>
</dbReference>
<dbReference type="Pfam" id="PF01871">
    <property type="entry name" value="AMMECR1"/>
    <property type="match status" value="1"/>
</dbReference>
<dbReference type="SUPFAM" id="SSF143447">
    <property type="entry name" value="AMMECR1-like"/>
    <property type="match status" value="1"/>
</dbReference>
<dbReference type="PROSITE" id="PS51112">
    <property type="entry name" value="AMMECR1"/>
    <property type="match status" value="1"/>
</dbReference>
<feature type="chain" id="PRO_1000130912" description="Protein TON_1965">
    <location>
        <begin position="1"/>
        <end position="205"/>
    </location>
</feature>
<feature type="domain" description="AMMECR1" evidence="1">
    <location>
        <begin position="7"/>
        <end position="201"/>
    </location>
</feature>
<gene>
    <name type="ordered locus">TON_1965</name>
</gene>
<evidence type="ECO:0000255" key="1">
    <source>
        <dbReference type="HAMAP-Rule" id="MF_00645"/>
    </source>
</evidence>
<name>Y1965_THEON</name>
<accession>B6YW91</accession>
<organism>
    <name type="scientific">Thermococcus onnurineus (strain NA1)</name>
    <dbReference type="NCBI Taxonomy" id="523850"/>
    <lineage>
        <taxon>Archaea</taxon>
        <taxon>Methanobacteriati</taxon>
        <taxon>Methanobacteriota</taxon>
        <taxon>Thermococci</taxon>
        <taxon>Thermococcales</taxon>
        <taxon>Thermococcaceae</taxon>
        <taxon>Thermococcus</taxon>
    </lineage>
</organism>
<reference key="1">
    <citation type="journal article" date="2008" name="J. Bacteriol.">
        <title>The complete genome sequence of Thermococcus onnurineus NA1 reveals a mixed heterotrophic and carboxydotrophic metabolism.</title>
        <authorList>
            <person name="Lee H.S."/>
            <person name="Kang S.G."/>
            <person name="Bae S.S."/>
            <person name="Lim J.K."/>
            <person name="Cho Y."/>
            <person name="Kim Y.J."/>
            <person name="Jeon J.H."/>
            <person name="Cha S.-S."/>
            <person name="Kwon K.K."/>
            <person name="Kim H.-T."/>
            <person name="Park C.-J."/>
            <person name="Lee H.-W."/>
            <person name="Kim S.I."/>
            <person name="Chun J."/>
            <person name="Colwell R.R."/>
            <person name="Kim S.-J."/>
            <person name="Lee J.-H."/>
        </authorList>
    </citation>
    <scope>NUCLEOTIDE SEQUENCE [LARGE SCALE GENOMIC DNA]</scope>
    <source>
        <strain>NA1</strain>
    </source>
</reference>
<sequence>MYRIKDEWGEFLVRLARRAIEEYVRNGRTIEPPEGTPPELWEKMGVFVTLNRHNVPPQMSLRGCIGFPLPIYPLVEATIKAAIYAAVDDPRFPPVKESELDDIVIEVSVLTPPELIEGPPEERPRKIKVGRDGLIIEKGIHSGLLLPQVPIEWGWDEEEFLAQTCWKAGLPPDCWLDEDTKVYRFTAEIFEEEYPKGPVKRKPLV</sequence>